<organism>
    <name type="scientific">Burkholderia mallei (strain NCTC 10229)</name>
    <dbReference type="NCBI Taxonomy" id="412022"/>
    <lineage>
        <taxon>Bacteria</taxon>
        <taxon>Pseudomonadati</taxon>
        <taxon>Pseudomonadota</taxon>
        <taxon>Betaproteobacteria</taxon>
        <taxon>Burkholderiales</taxon>
        <taxon>Burkholderiaceae</taxon>
        <taxon>Burkholderia</taxon>
        <taxon>pseudomallei group</taxon>
    </lineage>
</organism>
<sequence length="533" mass="58354">MNDFWQHCSALLERELTPQQYVTWIKPLAPVAFDAAANTLSIAAPNRFKLDWVKSQFSGRISDLARDFWNAPIEVQFVLDPKAGQRSPAGATPLAPRAPLPSANPAPVGPGPACAPAVDAHAPAPAGMNAATAAAVAAAQAAQAAQANAAALNADEAADLDLPSLTAHEAAAGRRTWRPGAANANSEAADSMYERSKLNPVLTFDNFVTGKANQLARAAAIQVADNPGISYNPLFLYGGVGLGKTHLIHAIGNQLLLDKPGARIRYIHAEQYVSDVVKAYQRKAFDDFKRYYHSLDLLLIDDIQFFSGKSRTQEEFFYAFEALVANKAQVIITSDTYPKEISGIDDRLISRFDSGLTVAIEPPELEMRVAILMRKAQSEGVSLSEDVAFFVAKHLRSNVRELEGALRKILAYSKFHGREITIELTKEALKDLLTVQNRQISVENIQKTVADFYNIKVADMYSKKRPANIARPRQIAMYLAKELTQKSLPEIGELFGGRDHTTVLHAVRKIADERGKDAQLNHELHVLEQTLKG</sequence>
<evidence type="ECO:0000255" key="1">
    <source>
        <dbReference type="HAMAP-Rule" id="MF_00377"/>
    </source>
</evidence>
<evidence type="ECO:0000256" key="2">
    <source>
        <dbReference type="SAM" id="MobiDB-lite"/>
    </source>
</evidence>
<accession>A2S8D2</accession>
<feature type="chain" id="PRO_1000048616" description="Chromosomal replication initiator protein DnaA">
    <location>
        <begin position="1"/>
        <end position="533"/>
    </location>
</feature>
<feature type="region of interest" description="Domain I, interacts with DnaA modulators" evidence="1">
    <location>
        <begin position="1"/>
        <end position="72"/>
    </location>
</feature>
<feature type="region of interest" description="Domain II" evidence="1">
    <location>
        <begin position="72"/>
        <end position="196"/>
    </location>
</feature>
<feature type="region of interest" description="Disordered" evidence="2">
    <location>
        <begin position="83"/>
        <end position="110"/>
    </location>
</feature>
<feature type="region of interest" description="Domain III, AAA+ region" evidence="1">
    <location>
        <begin position="197"/>
        <end position="413"/>
    </location>
</feature>
<feature type="region of interest" description="Domain IV, binds dsDNA" evidence="1">
    <location>
        <begin position="414"/>
        <end position="533"/>
    </location>
</feature>
<feature type="compositionally biased region" description="Pro residues" evidence="2">
    <location>
        <begin position="96"/>
        <end position="110"/>
    </location>
</feature>
<feature type="binding site" evidence="1">
    <location>
        <position position="241"/>
    </location>
    <ligand>
        <name>ATP</name>
        <dbReference type="ChEBI" id="CHEBI:30616"/>
    </ligand>
</feature>
<feature type="binding site" evidence="1">
    <location>
        <position position="243"/>
    </location>
    <ligand>
        <name>ATP</name>
        <dbReference type="ChEBI" id="CHEBI:30616"/>
    </ligand>
</feature>
<feature type="binding site" evidence="1">
    <location>
        <position position="244"/>
    </location>
    <ligand>
        <name>ATP</name>
        <dbReference type="ChEBI" id="CHEBI:30616"/>
    </ligand>
</feature>
<feature type="binding site" evidence="1">
    <location>
        <position position="245"/>
    </location>
    <ligand>
        <name>ATP</name>
        <dbReference type="ChEBI" id="CHEBI:30616"/>
    </ligand>
</feature>
<comment type="function">
    <text evidence="1">Plays an essential role in the initiation and regulation of chromosomal replication. ATP-DnaA binds to the origin of replication (oriC) to initiate formation of the DNA replication initiation complex once per cell cycle. Binds the DnaA box (a 9 base pair repeat at the origin) and separates the double-stranded (ds)DNA. Forms a right-handed helical filament on oriC DNA; dsDNA binds to the exterior of the filament while single-stranded (ss)DNA is stabiized in the filament's interior. The ATP-DnaA-oriC complex binds and stabilizes one strand of the AT-rich DNA unwinding element (DUE), permitting loading of DNA polymerase. After initiation quickly degrades to an ADP-DnaA complex that is not apt for DNA replication. Binds acidic phospholipids.</text>
</comment>
<comment type="subunit">
    <text evidence="1">Oligomerizes as a right-handed, spiral filament on DNA at oriC.</text>
</comment>
<comment type="subcellular location">
    <subcellularLocation>
        <location evidence="1">Cytoplasm</location>
    </subcellularLocation>
</comment>
<comment type="domain">
    <text evidence="1">Domain I is involved in oligomerization and binding regulators, domain II is flexibile and of varying length in different bacteria, domain III forms the AAA+ region, while domain IV binds dsDNA.</text>
</comment>
<comment type="similarity">
    <text evidence="1">Belongs to the DnaA family.</text>
</comment>
<gene>
    <name evidence="1" type="primary">dnaA</name>
    <name type="ordered locus">BMA10229_A2237</name>
</gene>
<reference key="1">
    <citation type="journal article" date="2010" name="Genome Biol. Evol.">
        <title>Continuing evolution of Burkholderia mallei through genome reduction and large-scale rearrangements.</title>
        <authorList>
            <person name="Losada L."/>
            <person name="Ronning C.M."/>
            <person name="DeShazer D."/>
            <person name="Woods D."/>
            <person name="Fedorova N."/>
            <person name="Kim H.S."/>
            <person name="Shabalina S.A."/>
            <person name="Pearson T.R."/>
            <person name="Brinkac L."/>
            <person name="Tan P."/>
            <person name="Nandi T."/>
            <person name="Crabtree J."/>
            <person name="Badger J."/>
            <person name="Beckstrom-Sternberg S."/>
            <person name="Saqib M."/>
            <person name="Schutzer S.E."/>
            <person name="Keim P."/>
            <person name="Nierman W.C."/>
        </authorList>
    </citation>
    <scope>NUCLEOTIDE SEQUENCE [LARGE SCALE GENOMIC DNA]</scope>
    <source>
        <strain>NCTC 10229</strain>
    </source>
</reference>
<proteinExistence type="inferred from homology"/>
<protein>
    <recommendedName>
        <fullName evidence="1">Chromosomal replication initiator protein DnaA</fullName>
    </recommendedName>
</protein>
<dbReference type="EMBL" id="CP000546">
    <property type="protein sequence ID" value="ABN01563.1"/>
    <property type="molecule type" value="Genomic_DNA"/>
</dbReference>
<dbReference type="RefSeq" id="WP_004203399.1">
    <property type="nucleotide sequence ID" value="NC_008836.1"/>
</dbReference>
<dbReference type="SMR" id="A2S8D2"/>
<dbReference type="KEGG" id="bml:BMA10229_A2237"/>
<dbReference type="HOGENOM" id="CLU_026910_0_1_4"/>
<dbReference type="Proteomes" id="UP000002283">
    <property type="component" value="Chromosome I"/>
</dbReference>
<dbReference type="GO" id="GO:0005737">
    <property type="term" value="C:cytoplasm"/>
    <property type="evidence" value="ECO:0007669"/>
    <property type="project" value="UniProtKB-SubCell"/>
</dbReference>
<dbReference type="GO" id="GO:0005886">
    <property type="term" value="C:plasma membrane"/>
    <property type="evidence" value="ECO:0007669"/>
    <property type="project" value="TreeGrafter"/>
</dbReference>
<dbReference type="GO" id="GO:0005524">
    <property type="term" value="F:ATP binding"/>
    <property type="evidence" value="ECO:0007669"/>
    <property type="project" value="UniProtKB-UniRule"/>
</dbReference>
<dbReference type="GO" id="GO:0016887">
    <property type="term" value="F:ATP hydrolysis activity"/>
    <property type="evidence" value="ECO:0007669"/>
    <property type="project" value="InterPro"/>
</dbReference>
<dbReference type="GO" id="GO:0003688">
    <property type="term" value="F:DNA replication origin binding"/>
    <property type="evidence" value="ECO:0007669"/>
    <property type="project" value="UniProtKB-UniRule"/>
</dbReference>
<dbReference type="GO" id="GO:0008289">
    <property type="term" value="F:lipid binding"/>
    <property type="evidence" value="ECO:0007669"/>
    <property type="project" value="UniProtKB-KW"/>
</dbReference>
<dbReference type="GO" id="GO:0006270">
    <property type="term" value="P:DNA replication initiation"/>
    <property type="evidence" value="ECO:0007669"/>
    <property type="project" value="UniProtKB-UniRule"/>
</dbReference>
<dbReference type="GO" id="GO:0006275">
    <property type="term" value="P:regulation of DNA replication"/>
    <property type="evidence" value="ECO:0007669"/>
    <property type="project" value="UniProtKB-UniRule"/>
</dbReference>
<dbReference type="CDD" id="cd00009">
    <property type="entry name" value="AAA"/>
    <property type="match status" value="1"/>
</dbReference>
<dbReference type="CDD" id="cd06571">
    <property type="entry name" value="Bac_DnaA_C"/>
    <property type="match status" value="1"/>
</dbReference>
<dbReference type="FunFam" id="1.10.8.60:FF:000003">
    <property type="entry name" value="Chromosomal replication initiator protein DnaA"/>
    <property type="match status" value="1"/>
</dbReference>
<dbReference type="FunFam" id="3.40.50.300:FF:000668">
    <property type="entry name" value="Chromosomal replication initiator protein DnaA"/>
    <property type="match status" value="1"/>
</dbReference>
<dbReference type="Gene3D" id="1.10.1750.10">
    <property type="match status" value="1"/>
</dbReference>
<dbReference type="Gene3D" id="1.10.8.60">
    <property type="match status" value="1"/>
</dbReference>
<dbReference type="Gene3D" id="3.30.300.180">
    <property type="match status" value="1"/>
</dbReference>
<dbReference type="Gene3D" id="3.40.50.300">
    <property type="entry name" value="P-loop containing nucleotide triphosphate hydrolases"/>
    <property type="match status" value="1"/>
</dbReference>
<dbReference type="HAMAP" id="MF_00377">
    <property type="entry name" value="DnaA_bact"/>
    <property type="match status" value="1"/>
</dbReference>
<dbReference type="InterPro" id="IPR003593">
    <property type="entry name" value="AAA+_ATPase"/>
</dbReference>
<dbReference type="InterPro" id="IPR001957">
    <property type="entry name" value="Chromosome_initiator_DnaA"/>
</dbReference>
<dbReference type="InterPro" id="IPR020591">
    <property type="entry name" value="Chromosome_initiator_DnaA-like"/>
</dbReference>
<dbReference type="InterPro" id="IPR018312">
    <property type="entry name" value="Chromosome_initiator_DnaA_CS"/>
</dbReference>
<dbReference type="InterPro" id="IPR013159">
    <property type="entry name" value="DnaA_C"/>
</dbReference>
<dbReference type="InterPro" id="IPR013317">
    <property type="entry name" value="DnaA_dom"/>
</dbReference>
<dbReference type="InterPro" id="IPR024633">
    <property type="entry name" value="DnaA_N_dom"/>
</dbReference>
<dbReference type="InterPro" id="IPR038454">
    <property type="entry name" value="DnaA_N_sf"/>
</dbReference>
<dbReference type="InterPro" id="IPR055199">
    <property type="entry name" value="Hda_lid"/>
</dbReference>
<dbReference type="InterPro" id="IPR027417">
    <property type="entry name" value="P-loop_NTPase"/>
</dbReference>
<dbReference type="InterPro" id="IPR010921">
    <property type="entry name" value="Trp_repressor/repl_initiator"/>
</dbReference>
<dbReference type="NCBIfam" id="TIGR00362">
    <property type="entry name" value="DnaA"/>
    <property type="match status" value="1"/>
</dbReference>
<dbReference type="PANTHER" id="PTHR30050">
    <property type="entry name" value="CHROMOSOMAL REPLICATION INITIATOR PROTEIN DNAA"/>
    <property type="match status" value="1"/>
</dbReference>
<dbReference type="PANTHER" id="PTHR30050:SF2">
    <property type="entry name" value="CHROMOSOMAL REPLICATION INITIATOR PROTEIN DNAA"/>
    <property type="match status" value="1"/>
</dbReference>
<dbReference type="Pfam" id="PF00308">
    <property type="entry name" value="Bac_DnaA"/>
    <property type="match status" value="1"/>
</dbReference>
<dbReference type="Pfam" id="PF08299">
    <property type="entry name" value="Bac_DnaA_C"/>
    <property type="match status" value="1"/>
</dbReference>
<dbReference type="Pfam" id="PF11638">
    <property type="entry name" value="DnaA_N"/>
    <property type="match status" value="1"/>
</dbReference>
<dbReference type="Pfam" id="PF22688">
    <property type="entry name" value="Hda_lid"/>
    <property type="match status" value="1"/>
</dbReference>
<dbReference type="PRINTS" id="PR00051">
    <property type="entry name" value="DNAA"/>
</dbReference>
<dbReference type="SMART" id="SM00382">
    <property type="entry name" value="AAA"/>
    <property type="match status" value="1"/>
</dbReference>
<dbReference type="SMART" id="SM00760">
    <property type="entry name" value="Bac_DnaA_C"/>
    <property type="match status" value="1"/>
</dbReference>
<dbReference type="SUPFAM" id="SSF52540">
    <property type="entry name" value="P-loop containing nucleoside triphosphate hydrolases"/>
    <property type="match status" value="1"/>
</dbReference>
<dbReference type="SUPFAM" id="SSF48295">
    <property type="entry name" value="TrpR-like"/>
    <property type="match status" value="1"/>
</dbReference>
<dbReference type="PROSITE" id="PS01008">
    <property type="entry name" value="DNAA"/>
    <property type="match status" value="1"/>
</dbReference>
<name>DNAA_BURM9</name>
<keyword id="KW-0067">ATP-binding</keyword>
<keyword id="KW-0963">Cytoplasm</keyword>
<keyword id="KW-0235">DNA replication</keyword>
<keyword id="KW-0238">DNA-binding</keyword>
<keyword id="KW-0446">Lipid-binding</keyword>
<keyword id="KW-0547">Nucleotide-binding</keyword>